<feature type="chain" id="PRO_0000392297" description="Probable glycosyltransferase At5g25310">
    <location>
        <begin position="1"/>
        <end position="480"/>
    </location>
</feature>
<feature type="topological domain" description="Cytoplasmic" evidence="2">
    <location>
        <begin position="1"/>
        <end position="10"/>
    </location>
</feature>
<feature type="transmembrane region" description="Helical; Signal-anchor for type II membrane protein" evidence="2">
    <location>
        <begin position="11"/>
        <end position="31"/>
    </location>
</feature>
<feature type="topological domain" description="Lumenal" evidence="2">
    <location>
        <begin position="32"/>
        <end position="480"/>
    </location>
</feature>
<feature type="glycosylation site" description="N-linked (GlcNAc...) asparagine" evidence="2">
    <location>
        <position position="85"/>
    </location>
</feature>
<feature type="glycosylation site" description="N-linked (GlcNAc...) asparagine" evidence="2">
    <location>
        <position position="120"/>
    </location>
</feature>
<feature type="glycosylation site" description="N-linked (GlcNAc...) asparagine" evidence="2">
    <location>
        <position position="243"/>
    </location>
</feature>
<feature type="glycosylation site" description="N-linked (GlcNAc...) asparagine" evidence="2">
    <location>
        <position position="271"/>
    </location>
</feature>
<feature type="glycosylation site" description="N-linked (GlcNAc...) asparagine" evidence="2">
    <location>
        <position position="281"/>
    </location>
</feature>
<name>GLYT6_ARATH</name>
<protein>
    <recommendedName>
        <fullName>Probable glycosyltransferase At5g25310</fullName>
        <ecNumber>2.4.-.-</ecNumber>
    </recommendedName>
</protein>
<evidence type="ECO:0000250" key="1"/>
<evidence type="ECO:0000255" key="2"/>
<evidence type="ECO:0000269" key="3">
    <source>
    </source>
</evidence>
<evidence type="ECO:0000305" key="4"/>
<gene>
    <name type="ordered locus">At5g25310</name>
    <name type="ORF">F18G18.50</name>
</gene>
<keyword id="KW-0961">Cell wall biogenesis/degradation</keyword>
<keyword id="KW-0325">Glycoprotein</keyword>
<keyword id="KW-0328">Glycosyltransferase</keyword>
<keyword id="KW-0333">Golgi apparatus</keyword>
<keyword id="KW-0472">Membrane</keyword>
<keyword id="KW-1185">Reference proteome</keyword>
<keyword id="KW-0735">Signal-anchor</keyword>
<keyword id="KW-0808">Transferase</keyword>
<keyword id="KW-0812">Transmembrane</keyword>
<keyword id="KW-1133">Transmembrane helix</keyword>
<proteinExistence type="inferred from homology"/>
<sequence>MDKFQSKFTRFGFISICFGSIALVLLISHCSTSFFDYSFQKFKFSFPEETELRRNVYTSSSGEENRVVVDSRHVSQQILTVRSTNSTLQSKPEKLNRRNLVEQGLAKARASILEASSNVNTTLFKSDLPNSEIYRNPSALYRSYLEMEKRFKVYVYEEGEPPLVHDGPCKSVYAVEGRFITEMEKRRTKFRTYDPNQAYVYFLPFSVTWLVRYLYEGNSDAKPLKTFVSDYIRLVSTNHPFWNRTNGADHFMLTCHDWGPLTSQANRDLFNTSIRVMCNANSSEGFNPTKDVTLPEIKLYGGEVDHKLRLSKTLSASPRPYLGFFAGGVHGPVRPILLKHWKQRDLDMPVYEYLPKHLNYYDFMRSSKFCFCPSGYEVASPRVIEAIYSECIPVILSVNFVLPFTDVLRWETFSVLVDVSEIPRLKEILMSISNEKYEWLKSNLRYVRRHFELNDPPQRFDAFHLTLHSIWLRRLNLKLT</sequence>
<comment type="function">
    <text>May be involved in cell wall biosynthesis.</text>
</comment>
<comment type="subcellular location">
    <subcellularLocation>
        <location evidence="1">Golgi apparatus membrane</location>
        <topology evidence="1">Single-pass type II membrane protein</topology>
    </subcellularLocation>
</comment>
<comment type="disruption phenotype">
    <text evidence="3">No visible phenotype.</text>
</comment>
<comment type="similarity">
    <text evidence="4">Belongs to the glycosyltransferase 47 family.</text>
</comment>
<accession>Q3E7Q9</accession>
<organism>
    <name type="scientific">Arabidopsis thaliana</name>
    <name type="common">Mouse-ear cress</name>
    <dbReference type="NCBI Taxonomy" id="3702"/>
    <lineage>
        <taxon>Eukaryota</taxon>
        <taxon>Viridiplantae</taxon>
        <taxon>Streptophyta</taxon>
        <taxon>Embryophyta</taxon>
        <taxon>Tracheophyta</taxon>
        <taxon>Spermatophyta</taxon>
        <taxon>Magnoliopsida</taxon>
        <taxon>eudicotyledons</taxon>
        <taxon>Gunneridae</taxon>
        <taxon>Pentapetalae</taxon>
        <taxon>rosids</taxon>
        <taxon>malvids</taxon>
        <taxon>Brassicales</taxon>
        <taxon>Brassicaceae</taxon>
        <taxon>Camelineae</taxon>
        <taxon>Arabidopsis</taxon>
    </lineage>
</organism>
<reference key="1">
    <citation type="journal article" date="2000" name="Nature">
        <title>Sequence and analysis of chromosome 5 of the plant Arabidopsis thaliana.</title>
        <authorList>
            <person name="Tabata S."/>
            <person name="Kaneko T."/>
            <person name="Nakamura Y."/>
            <person name="Kotani H."/>
            <person name="Kato T."/>
            <person name="Asamizu E."/>
            <person name="Miyajima N."/>
            <person name="Sasamoto S."/>
            <person name="Kimura T."/>
            <person name="Hosouchi T."/>
            <person name="Kawashima K."/>
            <person name="Kohara M."/>
            <person name="Matsumoto M."/>
            <person name="Matsuno A."/>
            <person name="Muraki A."/>
            <person name="Nakayama S."/>
            <person name="Nakazaki N."/>
            <person name="Naruo K."/>
            <person name="Okumura S."/>
            <person name="Shinpo S."/>
            <person name="Takeuchi C."/>
            <person name="Wada T."/>
            <person name="Watanabe A."/>
            <person name="Yamada M."/>
            <person name="Yasuda M."/>
            <person name="Sato S."/>
            <person name="de la Bastide M."/>
            <person name="Huang E."/>
            <person name="Spiegel L."/>
            <person name="Gnoj L."/>
            <person name="O'Shaughnessy A."/>
            <person name="Preston R."/>
            <person name="Habermann K."/>
            <person name="Murray J."/>
            <person name="Johnson D."/>
            <person name="Rohlfing T."/>
            <person name="Nelson J."/>
            <person name="Stoneking T."/>
            <person name="Pepin K."/>
            <person name="Spieth J."/>
            <person name="Sekhon M."/>
            <person name="Armstrong J."/>
            <person name="Becker M."/>
            <person name="Belter E."/>
            <person name="Cordum H."/>
            <person name="Cordes M."/>
            <person name="Courtney L."/>
            <person name="Courtney W."/>
            <person name="Dante M."/>
            <person name="Du H."/>
            <person name="Edwards J."/>
            <person name="Fryman J."/>
            <person name="Haakensen B."/>
            <person name="Lamar E."/>
            <person name="Latreille P."/>
            <person name="Leonard S."/>
            <person name="Meyer R."/>
            <person name="Mulvaney E."/>
            <person name="Ozersky P."/>
            <person name="Riley A."/>
            <person name="Strowmatt C."/>
            <person name="Wagner-McPherson C."/>
            <person name="Wollam A."/>
            <person name="Yoakum M."/>
            <person name="Bell M."/>
            <person name="Dedhia N."/>
            <person name="Parnell L."/>
            <person name="Shah R."/>
            <person name="Rodriguez M."/>
            <person name="Hoon See L."/>
            <person name="Vil D."/>
            <person name="Baker J."/>
            <person name="Kirchoff K."/>
            <person name="Toth K."/>
            <person name="King L."/>
            <person name="Bahret A."/>
            <person name="Miller B."/>
            <person name="Marra M.A."/>
            <person name="Martienssen R."/>
            <person name="McCombie W.R."/>
            <person name="Wilson R.K."/>
            <person name="Murphy G."/>
            <person name="Bancroft I."/>
            <person name="Volckaert G."/>
            <person name="Wambutt R."/>
            <person name="Duesterhoeft A."/>
            <person name="Stiekema W."/>
            <person name="Pohl T."/>
            <person name="Entian K.-D."/>
            <person name="Terryn N."/>
            <person name="Hartley N."/>
            <person name="Bent E."/>
            <person name="Johnson S."/>
            <person name="Langham S.-A."/>
            <person name="McCullagh B."/>
            <person name="Robben J."/>
            <person name="Grymonprez B."/>
            <person name="Zimmermann W."/>
            <person name="Ramsperger U."/>
            <person name="Wedler H."/>
            <person name="Balke K."/>
            <person name="Wedler E."/>
            <person name="Peters S."/>
            <person name="van Staveren M."/>
            <person name="Dirkse W."/>
            <person name="Mooijman P."/>
            <person name="Klein Lankhorst R."/>
            <person name="Weitzenegger T."/>
            <person name="Bothe G."/>
            <person name="Rose M."/>
            <person name="Hauf J."/>
            <person name="Berneiser S."/>
            <person name="Hempel S."/>
            <person name="Feldpausch M."/>
            <person name="Lamberth S."/>
            <person name="Villarroel R."/>
            <person name="Gielen J."/>
            <person name="Ardiles W."/>
            <person name="Bents O."/>
            <person name="Lemcke K."/>
            <person name="Kolesov G."/>
            <person name="Mayer K.F.X."/>
            <person name="Rudd S."/>
            <person name="Schoof H."/>
            <person name="Schueller C."/>
            <person name="Zaccaria P."/>
            <person name="Mewes H.-W."/>
            <person name="Bevan M."/>
            <person name="Fransz P.F."/>
        </authorList>
    </citation>
    <scope>NUCLEOTIDE SEQUENCE [LARGE SCALE GENOMIC DNA]</scope>
    <source>
        <strain>cv. Columbia</strain>
    </source>
</reference>
<reference key="2">
    <citation type="journal article" date="2017" name="Plant J.">
        <title>Araport11: a complete reannotation of the Arabidopsis thaliana reference genome.</title>
        <authorList>
            <person name="Cheng C.Y."/>
            <person name="Krishnakumar V."/>
            <person name="Chan A.P."/>
            <person name="Thibaud-Nissen F."/>
            <person name="Schobel S."/>
            <person name="Town C.D."/>
        </authorList>
    </citation>
    <scope>GENOME REANNOTATION</scope>
    <source>
        <strain>cv. Columbia</strain>
    </source>
</reference>
<reference key="3">
    <citation type="journal article" date="2008" name="Plant Cell">
        <title>Identification of a xylogalacturonan xylosyltransferase involved in pectin biosynthesis in Arabidopsis.</title>
        <authorList>
            <person name="Jensen J.K."/>
            <person name="Sorensen S.O."/>
            <person name="Harholt J."/>
            <person name="Geshi N."/>
            <person name="Sakuragi Y."/>
            <person name="Moller I."/>
            <person name="Zandleven J."/>
            <person name="Bernal A.J."/>
            <person name="Jensen N.B."/>
            <person name="Sorensen C."/>
            <person name="Pauly M."/>
            <person name="Beldman G."/>
            <person name="Willats W.G."/>
            <person name="Scheller H.V."/>
        </authorList>
    </citation>
    <scope>DISRUPTION PHENOTYPE</scope>
</reference>
<dbReference type="EC" id="2.4.-.-"/>
<dbReference type="EMBL" id="AC006258">
    <property type="status" value="NOT_ANNOTATED_CDS"/>
    <property type="molecule type" value="Genomic_DNA"/>
</dbReference>
<dbReference type="EMBL" id="CP002688">
    <property type="protein sequence ID" value="AED93425.1"/>
    <property type="molecule type" value="Genomic_DNA"/>
</dbReference>
<dbReference type="RefSeq" id="NP_197913.4">
    <property type="nucleotide sequence ID" value="NM_122440.6"/>
</dbReference>
<dbReference type="SMR" id="Q3E7Q9"/>
<dbReference type="FunCoup" id="Q3E7Q9">
    <property type="interactions" value="11"/>
</dbReference>
<dbReference type="STRING" id="3702.Q3E7Q9"/>
<dbReference type="CAZy" id="GT47">
    <property type="family name" value="Glycosyltransferase Family 47"/>
</dbReference>
<dbReference type="GlyGen" id="Q3E7Q9">
    <property type="glycosylation" value="5 sites"/>
</dbReference>
<dbReference type="iPTMnet" id="Q3E7Q9"/>
<dbReference type="PaxDb" id="3702-AT5G25310.1"/>
<dbReference type="ProteomicsDB" id="248548"/>
<dbReference type="DNASU" id="832603"/>
<dbReference type="EnsemblPlants" id="AT5G25310.1">
    <property type="protein sequence ID" value="AT5G25310.1"/>
    <property type="gene ID" value="AT5G25310"/>
</dbReference>
<dbReference type="GeneID" id="832603"/>
<dbReference type="Gramene" id="AT5G25310.1">
    <property type="protein sequence ID" value="AT5G25310.1"/>
    <property type="gene ID" value="AT5G25310"/>
</dbReference>
<dbReference type="KEGG" id="ath:AT5G25310"/>
<dbReference type="Araport" id="AT5G25310"/>
<dbReference type="TAIR" id="AT5G25310"/>
<dbReference type="eggNOG" id="KOG1021">
    <property type="taxonomic scope" value="Eukaryota"/>
</dbReference>
<dbReference type="HOGENOM" id="CLU_025166_1_3_1"/>
<dbReference type="InParanoid" id="Q3E7Q9"/>
<dbReference type="OMA" id="DMDYPSE"/>
<dbReference type="PhylomeDB" id="Q3E7Q9"/>
<dbReference type="BioCyc" id="ARA:AT5G25310-MONOMER"/>
<dbReference type="PRO" id="PR:Q3E7Q9"/>
<dbReference type="Proteomes" id="UP000006548">
    <property type="component" value="Chromosome 5"/>
</dbReference>
<dbReference type="ExpressionAtlas" id="Q3E7Q9">
    <property type="expression patterns" value="baseline and differential"/>
</dbReference>
<dbReference type="GO" id="GO:0000139">
    <property type="term" value="C:Golgi membrane"/>
    <property type="evidence" value="ECO:0007669"/>
    <property type="project" value="UniProtKB-SubCell"/>
</dbReference>
<dbReference type="GO" id="GO:0016757">
    <property type="term" value="F:glycosyltransferase activity"/>
    <property type="evidence" value="ECO:0007669"/>
    <property type="project" value="UniProtKB-KW"/>
</dbReference>
<dbReference type="GO" id="GO:0071555">
    <property type="term" value="P:cell wall organization"/>
    <property type="evidence" value="ECO:0007669"/>
    <property type="project" value="UniProtKB-KW"/>
</dbReference>
<dbReference type="GO" id="GO:0006486">
    <property type="term" value="P:protein glycosylation"/>
    <property type="evidence" value="ECO:0007669"/>
    <property type="project" value="InterPro"/>
</dbReference>
<dbReference type="InterPro" id="IPR004263">
    <property type="entry name" value="Exostosin"/>
</dbReference>
<dbReference type="InterPro" id="IPR040911">
    <property type="entry name" value="Exostosin_GT47"/>
</dbReference>
<dbReference type="PANTHER" id="PTHR11062">
    <property type="entry name" value="EXOSTOSIN HEPARAN SULFATE GLYCOSYLTRANSFERASE -RELATED"/>
    <property type="match status" value="1"/>
</dbReference>
<dbReference type="PANTHER" id="PTHR11062:SF337">
    <property type="entry name" value="OS04G0109900 PROTEIN"/>
    <property type="match status" value="1"/>
</dbReference>
<dbReference type="Pfam" id="PF03016">
    <property type="entry name" value="Exostosin_GT47"/>
    <property type="match status" value="1"/>
</dbReference>